<feature type="chain" id="PRO_1000149011" description="NAD(P)H dehydrogenase (quinone)">
    <location>
        <begin position="1"/>
        <end position="199"/>
    </location>
</feature>
<feature type="domain" description="Flavodoxin-like" evidence="1">
    <location>
        <begin position="4"/>
        <end position="190"/>
    </location>
</feature>
<feature type="binding site" evidence="1">
    <location>
        <begin position="10"/>
        <end position="15"/>
    </location>
    <ligand>
        <name>FMN</name>
        <dbReference type="ChEBI" id="CHEBI:58210"/>
    </ligand>
</feature>
<feature type="binding site" evidence="1">
    <location>
        <position position="12"/>
    </location>
    <ligand>
        <name>NAD(+)</name>
        <dbReference type="ChEBI" id="CHEBI:57540"/>
    </ligand>
</feature>
<feature type="binding site" evidence="1">
    <location>
        <begin position="78"/>
        <end position="80"/>
    </location>
    <ligand>
        <name>FMN</name>
        <dbReference type="ChEBI" id="CHEBI:58210"/>
    </ligand>
</feature>
<feature type="binding site" evidence="1">
    <location>
        <position position="98"/>
    </location>
    <ligand>
        <name>substrate</name>
    </ligand>
</feature>
<feature type="binding site" evidence="1">
    <location>
        <begin position="113"/>
        <end position="119"/>
    </location>
    <ligand>
        <name>FMN</name>
        <dbReference type="ChEBI" id="CHEBI:58210"/>
    </ligand>
</feature>
<feature type="binding site" evidence="1">
    <location>
        <position position="134"/>
    </location>
    <ligand>
        <name>FMN</name>
        <dbReference type="ChEBI" id="CHEBI:58210"/>
    </ligand>
</feature>
<sequence>MAKVLVLYYSSWGHVEQMAKAVAEGARETGAEVALKRVPELVPDEVAKQFHYKLDQEAPIATVEELADYDAIIFGTPTRYGNMASQMKQFIDQTGGLWAKGALVGKVGSAFTSTASQHGGQETTLTSFHTVLFHHGMVVVGLPYSFAGQNGVEQVKGNSPYGATTIADGDGSRQPSEVELDGARFQGRHVAGIAAKLAG</sequence>
<organism>
    <name type="scientific">Methylorubrum extorquens (strain CM4 / NCIMB 13688)</name>
    <name type="common">Methylobacterium extorquens</name>
    <dbReference type="NCBI Taxonomy" id="440085"/>
    <lineage>
        <taxon>Bacteria</taxon>
        <taxon>Pseudomonadati</taxon>
        <taxon>Pseudomonadota</taxon>
        <taxon>Alphaproteobacteria</taxon>
        <taxon>Hyphomicrobiales</taxon>
        <taxon>Methylobacteriaceae</taxon>
        <taxon>Methylorubrum</taxon>
    </lineage>
</organism>
<evidence type="ECO:0000255" key="1">
    <source>
        <dbReference type="HAMAP-Rule" id="MF_01017"/>
    </source>
</evidence>
<comment type="catalytic activity">
    <reaction evidence="1">
        <text>a quinone + NADH + H(+) = a quinol + NAD(+)</text>
        <dbReference type="Rhea" id="RHEA:46160"/>
        <dbReference type="ChEBI" id="CHEBI:15378"/>
        <dbReference type="ChEBI" id="CHEBI:24646"/>
        <dbReference type="ChEBI" id="CHEBI:57540"/>
        <dbReference type="ChEBI" id="CHEBI:57945"/>
        <dbReference type="ChEBI" id="CHEBI:132124"/>
        <dbReference type="EC" id="1.6.5.2"/>
    </reaction>
</comment>
<comment type="catalytic activity">
    <reaction evidence="1">
        <text>a quinone + NADPH + H(+) = a quinol + NADP(+)</text>
        <dbReference type="Rhea" id="RHEA:46164"/>
        <dbReference type="ChEBI" id="CHEBI:15378"/>
        <dbReference type="ChEBI" id="CHEBI:24646"/>
        <dbReference type="ChEBI" id="CHEBI:57783"/>
        <dbReference type="ChEBI" id="CHEBI:58349"/>
        <dbReference type="ChEBI" id="CHEBI:132124"/>
        <dbReference type="EC" id="1.6.5.2"/>
    </reaction>
</comment>
<comment type="cofactor">
    <cofactor evidence="1">
        <name>FMN</name>
        <dbReference type="ChEBI" id="CHEBI:58210"/>
    </cofactor>
    <text evidence="1">Binds 1 FMN per monomer.</text>
</comment>
<comment type="similarity">
    <text evidence="1">Belongs to the WrbA family.</text>
</comment>
<protein>
    <recommendedName>
        <fullName evidence="1">NAD(P)H dehydrogenase (quinone)</fullName>
        <ecNumber evidence="1">1.6.5.2</ecNumber>
    </recommendedName>
    <alternativeName>
        <fullName>Flavoprotein WrbA</fullName>
    </alternativeName>
    <alternativeName>
        <fullName evidence="1">NAD(P)H:quinone oxidoreductase</fullName>
        <shortName evidence="1">NQO</shortName>
    </alternativeName>
</protein>
<dbReference type="EC" id="1.6.5.2" evidence="1"/>
<dbReference type="EMBL" id="CP001298">
    <property type="protein sequence ID" value="ACK85421.1"/>
    <property type="molecule type" value="Genomic_DNA"/>
</dbReference>
<dbReference type="RefSeq" id="WP_003607417.1">
    <property type="nucleotide sequence ID" value="NC_011757.1"/>
</dbReference>
<dbReference type="SMR" id="B7KQ28"/>
<dbReference type="GeneID" id="72991998"/>
<dbReference type="KEGG" id="mch:Mchl_4647"/>
<dbReference type="HOGENOM" id="CLU_051402_0_2_5"/>
<dbReference type="Proteomes" id="UP000002385">
    <property type="component" value="Chromosome"/>
</dbReference>
<dbReference type="GO" id="GO:0016020">
    <property type="term" value="C:membrane"/>
    <property type="evidence" value="ECO:0007669"/>
    <property type="project" value="TreeGrafter"/>
</dbReference>
<dbReference type="GO" id="GO:0050660">
    <property type="term" value="F:flavin adenine dinucleotide binding"/>
    <property type="evidence" value="ECO:0007669"/>
    <property type="project" value="UniProtKB-UniRule"/>
</dbReference>
<dbReference type="GO" id="GO:0010181">
    <property type="term" value="F:FMN binding"/>
    <property type="evidence" value="ECO:0007669"/>
    <property type="project" value="InterPro"/>
</dbReference>
<dbReference type="GO" id="GO:0051287">
    <property type="term" value="F:NAD binding"/>
    <property type="evidence" value="ECO:0007669"/>
    <property type="project" value="UniProtKB-UniRule"/>
</dbReference>
<dbReference type="GO" id="GO:0050136">
    <property type="term" value="F:NADH:ubiquinone reductase (non-electrogenic) activity"/>
    <property type="evidence" value="ECO:0007669"/>
    <property type="project" value="RHEA"/>
</dbReference>
<dbReference type="GO" id="GO:0050661">
    <property type="term" value="F:NADP binding"/>
    <property type="evidence" value="ECO:0007669"/>
    <property type="project" value="UniProtKB-UniRule"/>
</dbReference>
<dbReference type="GO" id="GO:0008753">
    <property type="term" value="F:NADPH dehydrogenase (quinone) activity"/>
    <property type="evidence" value="ECO:0007669"/>
    <property type="project" value="RHEA"/>
</dbReference>
<dbReference type="FunFam" id="3.40.50.360:FF:000001">
    <property type="entry name" value="NAD(P)H dehydrogenase (Quinone) FQR1-like"/>
    <property type="match status" value="1"/>
</dbReference>
<dbReference type="Gene3D" id="3.40.50.360">
    <property type="match status" value="1"/>
</dbReference>
<dbReference type="HAMAP" id="MF_01017">
    <property type="entry name" value="NQOR"/>
    <property type="match status" value="1"/>
</dbReference>
<dbReference type="InterPro" id="IPR008254">
    <property type="entry name" value="Flavodoxin/NO_synth"/>
</dbReference>
<dbReference type="InterPro" id="IPR029039">
    <property type="entry name" value="Flavoprotein-like_sf"/>
</dbReference>
<dbReference type="InterPro" id="IPR010089">
    <property type="entry name" value="Flavoprotein_WrbA-like"/>
</dbReference>
<dbReference type="InterPro" id="IPR005025">
    <property type="entry name" value="FMN_Rdtase-like_dom"/>
</dbReference>
<dbReference type="InterPro" id="IPR037513">
    <property type="entry name" value="NQO"/>
</dbReference>
<dbReference type="NCBIfam" id="TIGR01755">
    <property type="entry name" value="flav_wrbA"/>
    <property type="match status" value="1"/>
</dbReference>
<dbReference type="NCBIfam" id="NF002999">
    <property type="entry name" value="PRK03767.1"/>
    <property type="match status" value="1"/>
</dbReference>
<dbReference type="PANTHER" id="PTHR30546">
    <property type="entry name" value="FLAVODOXIN-RELATED PROTEIN WRBA-RELATED"/>
    <property type="match status" value="1"/>
</dbReference>
<dbReference type="PANTHER" id="PTHR30546:SF23">
    <property type="entry name" value="FLAVOPROTEIN-LIKE PROTEIN YCP4-RELATED"/>
    <property type="match status" value="1"/>
</dbReference>
<dbReference type="Pfam" id="PF03358">
    <property type="entry name" value="FMN_red"/>
    <property type="match status" value="1"/>
</dbReference>
<dbReference type="SUPFAM" id="SSF52218">
    <property type="entry name" value="Flavoproteins"/>
    <property type="match status" value="1"/>
</dbReference>
<dbReference type="PROSITE" id="PS50902">
    <property type="entry name" value="FLAVODOXIN_LIKE"/>
    <property type="match status" value="1"/>
</dbReference>
<reference key="1">
    <citation type="submission" date="2008-12" db="EMBL/GenBank/DDBJ databases">
        <title>Complete sequence of chromosome of Methylobacterium chloromethanicum CM4.</title>
        <authorList>
            <consortium name="US DOE Joint Genome Institute"/>
            <person name="Lucas S."/>
            <person name="Copeland A."/>
            <person name="Lapidus A."/>
            <person name="Glavina del Rio T."/>
            <person name="Dalin E."/>
            <person name="Tice H."/>
            <person name="Bruce D."/>
            <person name="Goodwin L."/>
            <person name="Pitluck S."/>
            <person name="Chertkov O."/>
            <person name="Brettin T."/>
            <person name="Detter J.C."/>
            <person name="Han C."/>
            <person name="Larimer F."/>
            <person name="Land M."/>
            <person name="Hauser L."/>
            <person name="Kyrpides N."/>
            <person name="Mikhailova N."/>
            <person name="Marx C."/>
            <person name="Richardson P."/>
        </authorList>
    </citation>
    <scope>NUCLEOTIDE SEQUENCE [LARGE SCALE GENOMIC DNA]</scope>
    <source>
        <strain>CM4 / NCIMB 13688</strain>
    </source>
</reference>
<proteinExistence type="inferred from homology"/>
<keyword id="KW-0285">Flavoprotein</keyword>
<keyword id="KW-0288">FMN</keyword>
<keyword id="KW-0520">NAD</keyword>
<keyword id="KW-0521">NADP</keyword>
<keyword id="KW-0547">Nucleotide-binding</keyword>
<keyword id="KW-0560">Oxidoreductase</keyword>
<accession>B7KQ28</accession>
<gene>
    <name type="ordered locus">Mchl_4647</name>
</gene>
<name>NQOR_METC4</name>